<feature type="chain" id="PRO_1000115721" description="1-deoxy-D-xylulose-5-phosphate synthase">
    <location>
        <begin position="1"/>
        <end position="630"/>
    </location>
</feature>
<feature type="binding site" evidence="1">
    <location>
        <position position="72"/>
    </location>
    <ligand>
        <name>thiamine diphosphate</name>
        <dbReference type="ChEBI" id="CHEBI:58937"/>
    </ligand>
</feature>
<feature type="binding site" evidence="1">
    <location>
        <begin position="113"/>
        <end position="115"/>
    </location>
    <ligand>
        <name>thiamine diphosphate</name>
        <dbReference type="ChEBI" id="CHEBI:58937"/>
    </ligand>
</feature>
<feature type="binding site" evidence="1">
    <location>
        <position position="144"/>
    </location>
    <ligand>
        <name>Mg(2+)</name>
        <dbReference type="ChEBI" id="CHEBI:18420"/>
    </ligand>
</feature>
<feature type="binding site" evidence="1">
    <location>
        <begin position="145"/>
        <end position="146"/>
    </location>
    <ligand>
        <name>thiamine diphosphate</name>
        <dbReference type="ChEBI" id="CHEBI:58937"/>
    </ligand>
</feature>
<feature type="binding site" evidence="1">
    <location>
        <position position="173"/>
    </location>
    <ligand>
        <name>Mg(2+)</name>
        <dbReference type="ChEBI" id="CHEBI:18420"/>
    </ligand>
</feature>
<feature type="binding site" evidence="1">
    <location>
        <position position="173"/>
    </location>
    <ligand>
        <name>thiamine diphosphate</name>
        <dbReference type="ChEBI" id="CHEBI:58937"/>
    </ligand>
</feature>
<feature type="binding site" evidence="1">
    <location>
        <position position="284"/>
    </location>
    <ligand>
        <name>thiamine diphosphate</name>
        <dbReference type="ChEBI" id="CHEBI:58937"/>
    </ligand>
</feature>
<feature type="binding site" evidence="1">
    <location>
        <position position="367"/>
    </location>
    <ligand>
        <name>thiamine diphosphate</name>
        <dbReference type="ChEBI" id="CHEBI:58937"/>
    </ligand>
</feature>
<gene>
    <name evidence="1" type="primary">dxs</name>
    <name type="ordered locus">BcerKBAB4_4029</name>
</gene>
<proteinExistence type="inferred from homology"/>
<evidence type="ECO:0000255" key="1">
    <source>
        <dbReference type="HAMAP-Rule" id="MF_00315"/>
    </source>
</evidence>
<keyword id="KW-0414">Isoprene biosynthesis</keyword>
<keyword id="KW-0460">Magnesium</keyword>
<keyword id="KW-0479">Metal-binding</keyword>
<keyword id="KW-0784">Thiamine biosynthesis</keyword>
<keyword id="KW-0786">Thiamine pyrophosphate</keyword>
<keyword id="KW-0808">Transferase</keyword>
<accession>A9VGD1</accession>
<dbReference type="EC" id="2.2.1.7" evidence="1"/>
<dbReference type="EMBL" id="CP000903">
    <property type="protein sequence ID" value="ABY45191.1"/>
    <property type="molecule type" value="Genomic_DNA"/>
</dbReference>
<dbReference type="RefSeq" id="WP_002088566.1">
    <property type="nucleotide sequence ID" value="NC_010184.1"/>
</dbReference>
<dbReference type="SMR" id="A9VGD1"/>
<dbReference type="KEGG" id="bwe:BcerKBAB4_4029"/>
<dbReference type="eggNOG" id="COG1154">
    <property type="taxonomic scope" value="Bacteria"/>
</dbReference>
<dbReference type="HOGENOM" id="CLU_009227_1_4_9"/>
<dbReference type="UniPathway" id="UPA00064">
    <property type="reaction ID" value="UER00091"/>
</dbReference>
<dbReference type="Proteomes" id="UP000002154">
    <property type="component" value="Chromosome"/>
</dbReference>
<dbReference type="GO" id="GO:0005829">
    <property type="term" value="C:cytosol"/>
    <property type="evidence" value="ECO:0007669"/>
    <property type="project" value="TreeGrafter"/>
</dbReference>
<dbReference type="GO" id="GO:0008661">
    <property type="term" value="F:1-deoxy-D-xylulose-5-phosphate synthase activity"/>
    <property type="evidence" value="ECO:0007669"/>
    <property type="project" value="UniProtKB-UniRule"/>
</dbReference>
<dbReference type="GO" id="GO:0000287">
    <property type="term" value="F:magnesium ion binding"/>
    <property type="evidence" value="ECO:0007669"/>
    <property type="project" value="UniProtKB-UniRule"/>
</dbReference>
<dbReference type="GO" id="GO:0030976">
    <property type="term" value="F:thiamine pyrophosphate binding"/>
    <property type="evidence" value="ECO:0007669"/>
    <property type="project" value="UniProtKB-UniRule"/>
</dbReference>
<dbReference type="GO" id="GO:0052865">
    <property type="term" value="P:1-deoxy-D-xylulose 5-phosphate biosynthetic process"/>
    <property type="evidence" value="ECO:0007669"/>
    <property type="project" value="UniProtKB-UniPathway"/>
</dbReference>
<dbReference type="GO" id="GO:0019288">
    <property type="term" value="P:isopentenyl diphosphate biosynthetic process, methylerythritol 4-phosphate pathway"/>
    <property type="evidence" value="ECO:0007669"/>
    <property type="project" value="TreeGrafter"/>
</dbReference>
<dbReference type="GO" id="GO:0016114">
    <property type="term" value="P:terpenoid biosynthetic process"/>
    <property type="evidence" value="ECO:0007669"/>
    <property type="project" value="UniProtKB-UniRule"/>
</dbReference>
<dbReference type="GO" id="GO:0009228">
    <property type="term" value="P:thiamine biosynthetic process"/>
    <property type="evidence" value="ECO:0007669"/>
    <property type="project" value="UniProtKB-UniRule"/>
</dbReference>
<dbReference type="CDD" id="cd02007">
    <property type="entry name" value="TPP_DXS"/>
    <property type="match status" value="1"/>
</dbReference>
<dbReference type="CDD" id="cd07033">
    <property type="entry name" value="TPP_PYR_DXS_TK_like"/>
    <property type="match status" value="1"/>
</dbReference>
<dbReference type="FunFam" id="3.40.50.920:FF:000002">
    <property type="entry name" value="1-deoxy-D-xylulose-5-phosphate synthase"/>
    <property type="match status" value="1"/>
</dbReference>
<dbReference type="FunFam" id="3.40.50.970:FF:000030">
    <property type="entry name" value="1-deoxy-D-xylulose-5-phosphate synthase"/>
    <property type="match status" value="1"/>
</dbReference>
<dbReference type="Gene3D" id="3.40.50.920">
    <property type="match status" value="1"/>
</dbReference>
<dbReference type="Gene3D" id="3.40.50.970">
    <property type="match status" value="2"/>
</dbReference>
<dbReference type="HAMAP" id="MF_00315">
    <property type="entry name" value="DXP_synth"/>
    <property type="match status" value="1"/>
</dbReference>
<dbReference type="InterPro" id="IPR005477">
    <property type="entry name" value="Dxylulose-5-P_synthase"/>
</dbReference>
<dbReference type="InterPro" id="IPR029061">
    <property type="entry name" value="THDP-binding"/>
</dbReference>
<dbReference type="InterPro" id="IPR009014">
    <property type="entry name" value="Transketo_C/PFOR_II"/>
</dbReference>
<dbReference type="InterPro" id="IPR005475">
    <property type="entry name" value="Transketolase-like_Pyr-bd"/>
</dbReference>
<dbReference type="InterPro" id="IPR020826">
    <property type="entry name" value="Transketolase_BS"/>
</dbReference>
<dbReference type="InterPro" id="IPR033248">
    <property type="entry name" value="Transketolase_C"/>
</dbReference>
<dbReference type="InterPro" id="IPR049557">
    <property type="entry name" value="Transketolase_CS"/>
</dbReference>
<dbReference type="NCBIfam" id="TIGR00204">
    <property type="entry name" value="dxs"/>
    <property type="match status" value="1"/>
</dbReference>
<dbReference type="NCBIfam" id="NF003933">
    <property type="entry name" value="PRK05444.2-2"/>
    <property type="match status" value="1"/>
</dbReference>
<dbReference type="PANTHER" id="PTHR43322">
    <property type="entry name" value="1-D-DEOXYXYLULOSE 5-PHOSPHATE SYNTHASE-RELATED"/>
    <property type="match status" value="1"/>
</dbReference>
<dbReference type="PANTHER" id="PTHR43322:SF5">
    <property type="entry name" value="1-DEOXY-D-XYLULOSE-5-PHOSPHATE SYNTHASE, CHLOROPLASTIC"/>
    <property type="match status" value="1"/>
</dbReference>
<dbReference type="Pfam" id="PF13292">
    <property type="entry name" value="DXP_synthase_N"/>
    <property type="match status" value="1"/>
</dbReference>
<dbReference type="Pfam" id="PF02779">
    <property type="entry name" value="Transket_pyr"/>
    <property type="match status" value="1"/>
</dbReference>
<dbReference type="Pfam" id="PF02780">
    <property type="entry name" value="Transketolase_C"/>
    <property type="match status" value="1"/>
</dbReference>
<dbReference type="SMART" id="SM00861">
    <property type="entry name" value="Transket_pyr"/>
    <property type="match status" value="1"/>
</dbReference>
<dbReference type="SUPFAM" id="SSF52518">
    <property type="entry name" value="Thiamin diphosphate-binding fold (THDP-binding)"/>
    <property type="match status" value="2"/>
</dbReference>
<dbReference type="SUPFAM" id="SSF52922">
    <property type="entry name" value="TK C-terminal domain-like"/>
    <property type="match status" value="1"/>
</dbReference>
<dbReference type="PROSITE" id="PS00801">
    <property type="entry name" value="TRANSKETOLASE_1"/>
    <property type="match status" value="1"/>
</dbReference>
<dbReference type="PROSITE" id="PS00802">
    <property type="entry name" value="TRANSKETOLASE_2"/>
    <property type="match status" value="1"/>
</dbReference>
<comment type="function">
    <text evidence="1">Catalyzes the acyloin condensation reaction between C atoms 2 and 3 of pyruvate and glyceraldehyde 3-phosphate to yield 1-deoxy-D-xylulose-5-phosphate (DXP).</text>
</comment>
<comment type="catalytic activity">
    <reaction evidence="1">
        <text>D-glyceraldehyde 3-phosphate + pyruvate + H(+) = 1-deoxy-D-xylulose 5-phosphate + CO2</text>
        <dbReference type="Rhea" id="RHEA:12605"/>
        <dbReference type="ChEBI" id="CHEBI:15361"/>
        <dbReference type="ChEBI" id="CHEBI:15378"/>
        <dbReference type="ChEBI" id="CHEBI:16526"/>
        <dbReference type="ChEBI" id="CHEBI:57792"/>
        <dbReference type="ChEBI" id="CHEBI:59776"/>
        <dbReference type="EC" id="2.2.1.7"/>
    </reaction>
</comment>
<comment type="cofactor">
    <cofactor evidence="1">
        <name>Mg(2+)</name>
        <dbReference type="ChEBI" id="CHEBI:18420"/>
    </cofactor>
    <text evidence="1">Binds 1 Mg(2+) ion per subunit.</text>
</comment>
<comment type="cofactor">
    <cofactor evidence="1">
        <name>thiamine diphosphate</name>
        <dbReference type="ChEBI" id="CHEBI:58937"/>
    </cofactor>
    <text evidence="1">Binds 1 thiamine pyrophosphate per subunit.</text>
</comment>
<comment type="pathway">
    <text evidence="1">Metabolic intermediate biosynthesis; 1-deoxy-D-xylulose 5-phosphate biosynthesis; 1-deoxy-D-xylulose 5-phosphate from D-glyceraldehyde 3-phosphate and pyruvate: step 1/1.</text>
</comment>
<comment type="subunit">
    <text evidence="1">Homodimer.</text>
</comment>
<comment type="similarity">
    <text evidence="1">Belongs to the transketolase family. DXPS subfamily.</text>
</comment>
<reference key="1">
    <citation type="journal article" date="2008" name="Chem. Biol. Interact.">
        <title>Extending the Bacillus cereus group genomics to putative food-borne pathogens of different toxicity.</title>
        <authorList>
            <person name="Lapidus A."/>
            <person name="Goltsman E."/>
            <person name="Auger S."/>
            <person name="Galleron N."/>
            <person name="Segurens B."/>
            <person name="Dossat C."/>
            <person name="Land M.L."/>
            <person name="Broussolle V."/>
            <person name="Brillard J."/>
            <person name="Guinebretiere M.-H."/>
            <person name="Sanchis V."/>
            <person name="Nguen-the C."/>
            <person name="Lereclus D."/>
            <person name="Richardson P."/>
            <person name="Wincker P."/>
            <person name="Weissenbach J."/>
            <person name="Ehrlich S.D."/>
            <person name="Sorokin A."/>
        </authorList>
    </citation>
    <scope>NUCLEOTIDE SEQUENCE [LARGE SCALE GENOMIC DNA]</scope>
    <source>
        <strain>KBAB4</strain>
    </source>
</reference>
<sequence>MDLTQIQNPSFLKDMSISELEGLSEDIRKFLIEELSQTGGHIAPNLGVVELTIALHKLFDSPKDKFLWDVGHQSYVHKILTGRAKEFGTLRQYQGLCGFPKRCESEHDVWETGHSSTSLSAAMGMALARDLKKTEEYVIPIIGDGALTGGMALEALNHIGHEKTDMIVILNDNEMSIAPNVGALHNVLGRLRTAGKYHWVKDELEYILKKIPAVGGKVAATAEKIKDSLKYLLVSGVFFEELGFTYLGPVDGHDYEKLFETLQYAKKTKGPVLVHVITKKGKGYKPAESDVIGTWHGTGSYKIESGDFVKPKEVAPAWSAVVSETVLKLARTDERIVAITPAMPVGSKLEKFQKEFPDRMIDVGIAEQHATTMAAGMATQGMKPFLAIYSTFLQRAYDQVVHDICRQNLNVFIGIDRSGLVGADGETHQGVFDIAFLRHLPNMVLMMPKDENEGQHLVYTAMQYEDGPIALRYARGNGLGVQMDEELKAIPIGTWETLKEGTQAAILTFGTTIPMAMEAAERLEQAGVSVKVVNARFIKPMDEAYLHELLGKNIPILTIEEACLIGGFGTGVVEFASENGYHSALIERMGIPDRFIEHGSVTKLLEEIGLTTDAVVDRIHTMIPSKQKRA</sequence>
<protein>
    <recommendedName>
        <fullName evidence="1">1-deoxy-D-xylulose-5-phosphate synthase</fullName>
        <ecNumber evidence="1">2.2.1.7</ecNumber>
    </recommendedName>
    <alternativeName>
        <fullName evidence="1">1-deoxyxylulose-5-phosphate synthase</fullName>
        <shortName evidence="1">DXP synthase</shortName>
        <shortName evidence="1">DXPS</shortName>
    </alternativeName>
</protein>
<name>DXS_BACMK</name>
<organism>
    <name type="scientific">Bacillus mycoides (strain KBAB4)</name>
    <name type="common">Bacillus weihenstephanensis</name>
    <dbReference type="NCBI Taxonomy" id="315730"/>
    <lineage>
        <taxon>Bacteria</taxon>
        <taxon>Bacillati</taxon>
        <taxon>Bacillota</taxon>
        <taxon>Bacilli</taxon>
        <taxon>Bacillales</taxon>
        <taxon>Bacillaceae</taxon>
        <taxon>Bacillus</taxon>
        <taxon>Bacillus cereus group</taxon>
    </lineage>
</organism>